<organism>
    <name type="scientific">Epiactis japonica</name>
    <name type="common">Sea anemone</name>
    <name type="synonym">Cnidopus japonicus</name>
    <dbReference type="NCBI Taxonomy" id="58804"/>
    <lineage>
        <taxon>Eukaryota</taxon>
        <taxon>Metazoa</taxon>
        <taxon>Cnidaria</taxon>
        <taxon>Anthozoa</taxon>
        <taxon>Hexacorallia</taxon>
        <taxon>Actiniaria</taxon>
        <taxon>Actiniidae</taxon>
        <taxon>Epiactis</taxon>
    </lineage>
</organism>
<protein>
    <recommendedName>
        <fullName evidence="3">Toxin AnmTx Cj 1c-1</fullName>
    </recommendedName>
</protein>
<name>CJ1C1_EPIJA</name>
<evidence type="ECO:0000250" key="1">
    <source>
        <dbReference type="UniProtKB" id="P0C280"/>
    </source>
</evidence>
<evidence type="ECO:0000269" key="2">
    <source>
    </source>
</evidence>
<evidence type="ECO:0000303" key="3">
    <source>
    </source>
</evidence>
<evidence type="ECO:0000305" key="4"/>
<evidence type="ECO:0000305" key="5">
    <source>
    </source>
</evidence>
<feature type="signal peptide" evidence="4">
    <location>
        <begin position="1" status="less than"/>
        <end position="7"/>
    </location>
</feature>
<feature type="chain" id="PRO_0000443394" description="Toxin AnmTx Cj 1c-1" evidence="5">
    <location>
        <begin position="8"/>
        <end position="53"/>
    </location>
</feature>
<feature type="modified residue" description="Glutamic acid 1-amide" evidence="4">
    <location>
        <position position="53"/>
    </location>
</feature>
<feature type="disulfide bond" evidence="1">
    <location>
        <begin position="9"/>
        <end position="50"/>
    </location>
</feature>
<feature type="disulfide bond" evidence="1">
    <location>
        <begin position="11"/>
        <end position="41"/>
    </location>
</feature>
<feature type="disulfide bond" evidence="1">
    <location>
        <begin position="33"/>
        <end position="51"/>
    </location>
</feature>
<feature type="non-terminal residue" evidence="4">
    <location>
        <position position="1"/>
    </location>
</feature>
<proteinExistence type="evidence at transcript level"/>
<sequence length="54" mass="5913">MLNKRGVPCRCESDGPPRQNNALSGTTFYVVGCNKAGWNKCRYINAISTCCKEG</sequence>
<reference key="1">
    <citation type="journal article" date="2017" name="Sci. Rep.">
        <title>Identification of unusual peptides with new Cys frameworks in the venom of the cold-water sea anemone Cnidopus japonicus.</title>
        <authorList>
            <person name="Babenko V.V."/>
            <person name="Mikov A.N."/>
            <person name="Manuvera V.A."/>
            <person name="Anikanov N.A."/>
            <person name="Kovalchuk S.I."/>
            <person name="Andreev Y.A."/>
            <person name="Logashina Y.A."/>
            <person name="Kornilov D.A."/>
            <person name="Manolov A.I."/>
            <person name="Sanamyan N.P."/>
            <person name="Sanamyan K.E."/>
            <person name="Kostryukova E.S."/>
            <person name="Kozlov S.A."/>
            <person name="Grishin E.V."/>
            <person name="Govorun V.M."/>
            <person name="Lazarev V.N."/>
        </authorList>
    </citation>
    <scope>NUCLEOTIDE SEQUENCE [MRNA]</scope>
    <scope>FUNCTION</scope>
    <scope>BIOASSAY</scope>
    <scope>TOXIC DOSE</scope>
</reference>
<comment type="function">
    <text evidence="2">In vivo, induces marked paralysis on shrimps (C.multidentata) at 10-20 seconds after injection and a weak toxicity when injected into insect larvae (M.domestica).</text>
</comment>
<comment type="subcellular location">
    <subcellularLocation>
        <location evidence="5">Secreted</location>
    </subcellularLocation>
    <subcellularLocation>
        <location evidence="4">Nematocyst</location>
    </subcellularLocation>
</comment>
<comment type="PTM">
    <text evidence="4">Contains 3 disulfide bonds.</text>
</comment>
<comment type="toxic dose">
    <text evidence="2">LD(100) is 30 ug/g on the shrimp C.multidentata.</text>
</comment>
<comment type="toxic dose">
    <text evidence="2">LD(50) is 30 ug/g when injected into fly larvae (M.domestica).</text>
</comment>
<comment type="similarity">
    <text evidence="4">Belongs to the sea anemone sodium channel inhibitory toxin family. Type I subfamily.</text>
</comment>
<comment type="caution">
    <text evidence="5">Toxicity tests have been done on recombinant non-amidated toxin.</text>
</comment>
<dbReference type="SMR" id="P0DPE5"/>
<dbReference type="GO" id="GO:0005576">
    <property type="term" value="C:extracellular region"/>
    <property type="evidence" value="ECO:0007669"/>
    <property type="project" value="UniProtKB-SubCell"/>
</dbReference>
<dbReference type="GO" id="GO:0042151">
    <property type="term" value="C:nematocyst"/>
    <property type="evidence" value="ECO:0007669"/>
    <property type="project" value="UniProtKB-SubCell"/>
</dbReference>
<dbReference type="GO" id="GO:0090729">
    <property type="term" value="F:toxin activity"/>
    <property type="evidence" value="ECO:0007669"/>
    <property type="project" value="UniProtKB-KW"/>
</dbReference>
<dbReference type="Gene3D" id="2.20.20.10">
    <property type="entry name" value="Anthopleurin-A"/>
    <property type="match status" value="1"/>
</dbReference>
<dbReference type="InterPro" id="IPR023355">
    <property type="entry name" value="Myo_ane_neurotoxin_sf"/>
</dbReference>
<dbReference type="Pfam" id="PF00706">
    <property type="entry name" value="Toxin_4"/>
    <property type="match status" value="1"/>
</dbReference>
<dbReference type="SUPFAM" id="SSF57392">
    <property type="entry name" value="Defensin-like"/>
    <property type="match status" value="1"/>
</dbReference>
<keyword id="KW-0027">Amidation</keyword>
<keyword id="KW-1015">Disulfide bond</keyword>
<keyword id="KW-0166">Nematocyst</keyword>
<keyword id="KW-0528">Neurotoxin</keyword>
<keyword id="KW-0964">Secreted</keyword>
<keyword id="KW-0732">Signal</keyword>
<keyword id="KW-0800">Toxin</keyword>
<accession>P0DPE5</accession>